<reference key="1">
    <citation type="submission" date="2005-08" db="EMBL/GenBank/DDBJ databases">
        <title>Complete sequence of chromosome 1 of Synechococcus elongatus PCC 7942.</title>
        <authorList>
            <consortium name="US DOE Joint Genome Institute"/>
            <person name="Copeland A."/>
            <person name="Lucas S."/>
            <person name="Lapidus A."/>
            <person name="Barry K."/>
            <person name="Detter J.C."/>
            <person name="Glavina T."/>
            <person name="Hammon N."/>
            <person name="Israni S."/>
            <person name="Pitluck S."/>
            <person name="Schmutz J."/>
            <person name="Larimer F."/>
            <person name="Land M."/>
            <person name="Kyrpides N."/>
            <person name="Lykidis A."/>
            <person name="Golden S."/>
            <person name="Richardson P."/>
        </authorList>
    </citation>
    <scope>NUCLEOTIDE SEQUENCE [LARGE SCALE GENOMIC DNA]</scope>
    <source>
        <strain>ATCC 33912 / PCC 7942 / FACHB-805</strain>
    </source>
</reference>
<gene>
    <name evidence="1" type="primary">ispG</name>
    <name type="ordered locus">Synpcc7942_0713</name>
</gene>
<organism>
    <name type="scientific">Synechococcus elongatus (strain ATCC 33912 / PCC 7942 / FACHB-805)</name>
    <name type="common">Anacystis nidulans R2</name>
    <dbReference type="NCBI Taxonomy" id="1140"/>
    <lineage>
        <taxon>Bacteria</taxon>
        <taxon>Bacillati</taxon>
        <taxon>Cyanobacteriota</taxon>
        <taxon>Cyanophyceae</taxon>
        <taxon>Synechococcales</taxon>
        <taxon>Synechococcaceae</taxon>
        <taxon>Synechococcus</taxon>
    </lineage>
</organism>
<name>ISPG_SYNE7</name>
<accession>Q31QC4</accession>
<dbReference type="EC" id="1.17.7.1" evidence="1"/>
<dbReference type="EMBL" id="CP000100">
    <property type="protein sequence ID" value="ABB56745.1"/>
    <property type="molecule type" value="Genomic_DNA"/>
</dbReference>
<dbReference type="RefSeq" id="WP_011243129.1">
    <property type="nucleotide sequence ID" value="NZ_JACJTX010000005.1"/>
</dbReference>
<dbReference type="SMR" id="Q31QC4"/>
<dbReference type="STRING" id="1140.Synpcc7942_0713"/>
<dbReference type="PaxDb" id="1140-Synpcc7942_0713"/>
<dbReference type="GeneID" id="72429547"/>
<dbReference type="KEGG" id="syf:Synpcc7942_0713"/>
<dbReference type="eggNOG" id="COG0821">
    <property type="taxonomic scope" value="Bacteria"/>
</dbReference>
<dbReference type="HOGENOM" id="CLU_042258_0_0_3"/>
<dbReference type="OrthoDB" id="9803214at2"/>
<dbReference type="BioCyc" id="SYNEL:SYNPCC7942_0713-MONOMER"/>
<dbReference type="UniPathway" id="UPA00056">
    <property type="reaction ID" value="UER00096"/>
</dbReference>
<dbReference type="Proteomes" id="UP000889800">
    <property type="component" value="Chromosome"/>
</dbReference>
<dbReference type="GO" id="GO:0051539">
    <property type="term" value="F:4 iron, 4 sulfur cluster binding"/>
    <property type="evidence" value="ECO:0007669"/>
    <property type="project" value="UniProtKB-UniRule"/>
</dbReference>
<dbReference type="GO" id="GO:0046429">
    <property type="term" value="F:4-hydroxy-3-methylbut-2-en-1-yl diphosphate synthase activity (ferredoxin)"/>
    <property type="evidence" value="ECO:0007669"/>
    <property type="project" value="UniProtKB-UniRule"/>
</dbReference>
<dbReference type="GO" id="GO:0005506">
    <property type="term" value="F:iron ion binding"/>
    <property type="evidence" value="ECO:0007669"/>
    <property type="project" value="InterPro"/>
</dbReference>
<dbReference type="GO" id="GO:0019288">
    <property type="term" value="P:isopentenyl diphosphate biosynthetic process, methylerythritol 4-phosphate pathway"/>
    <property type="evidence" value="ECO:0007669"/>
    <property type="project" value="UniProtKB-UniRule"/>
</dbReference>
<dbReference type="GO" id="GO:0016114">
    <property type="term" value="P:terpenoid biosynthetic process"/>
    <property type="evidence" value="ECO:0007669"/>
    <property type="project" value="InterPro"/>
</dbReference>
<dbReference type="FunFam" id="3.20.20.20:FF:000005">
    <property type="entry name" value="4-hydroxy-3-methylbut-2-en-1-yl diphosphate synthase (flavodoxin)"/>
    <property type="match status" value="1"/>
</dbReference>
<dbReference type="FunFam" id="3.30.413.10:FF:000006">
    <property type="entry name" value="4-hydroxy-3-methylbut-2-en-1-yl diphosphate synthase (flavodoxin)"/>
    <property type="match status" value="1"/>
</dbReference>
<dbReference type="Gene3D" id="3.20.20.20">
    <property type="entry name" value="Dihydropteroate synthase-like"/>
    <property type="match status" value="1"/>
</dbReference>
<dbReference type="Gene3D" id="3.30.413.10">
    <property type="entry name" value="Sulfite Reductase Hemoprotein, domain 1"/>
    <property type="match status" value="1"/>
</dbReference>
<dbReference type="HAMAP" id="MF_00159">
    <property type="entry name" value="IspG"/>
    <property type="match status" value="1"/>
</dbReference>
<dbReference type="InterPro" id="IPR011005">
    <property type="entry name" value="Dihydropteroate_synth-like_sf"/>
</dbReference>
<dbReference type="InterPro" id="IPR016425">
    <property type="entry name" value="IspG_bac"/>
</dbReference>
<dbReference type="InterPro" id="IPR004588">
    <property type="entry name" value="IspG_bac-typ"/>
</dbReference>
<dbReference type="InterPro" id="IPR045854">
    <property type="entry name" value="NO2/SO3_Rdtase_4Fe4S_sf"/>
</dbReference>
<dbReference type="NCBIfam" id="TIGR00612">
    <property type="entry name" value="ispG_gcpE"/>
    <property type="match status" value="1"/>
</dbReference>
<dbReference type="NCBIfam" id="NF001540">
    <property type="entry name" value="PRK00366.1"/>
    <property type="match status" value="1"/>
</dbReference>
<dbReference type="PANTHER" id="PTHR30454">
    <property type="entry name" value="4-HYDROXY-3-METHYLBUT-2-EN-1-YL DIPHOSPHATE SYNTHASE"/>
    <property type="match status" value="1"/>
</dbReference>
<dbReference type="PANTHER" id="PTHR30454:SF0">
    <property type="entry name" value="4-HYDROXY-3-METHYLBUT-2-EN-1-YL DIPHOSPHATE SYNTHASE (FERREDOXIN), CHLOROPLASTIC"/>
    <property type="match status" value="1"/>
</dbReference>
<dbReference type="Pfam" id="PF04551">
    <property type="entry name" value="GcpE"/>
    <property type="match status" value="1"/>
</dbReference>
<dbReference type="PIRSF" id="PIRSF004640">
    <property type="entry name" value="IspG"/>
    <property type="match status" value="1"/>
</dbReference>
<dbReference type="SUPFAM" id="SSF56014">
    <property type="entry name" value="Nitrite and sulphite reductase 4Fe-4S domain-like"/>
    <property type="match status" value="1"/>
</dbReference>
<proteinExistence type="inferred from homology"/>
<evidence type="ECO:0000255" key="1">
    <source>
        <dbReference type="HAMAP-Rule" id="MF_00159"/>
    </source>
</evidence>
<protein>
    <recommendedName>
        <fullName evidence="1">4-hydroxy-3-methylbut-2-en-1-yl diphosphate synthase (ferredoxin)</fullName>
        <ecNumber evidence="1">1.17.7.1</ecNumber>
    </recommendedName>
    <alternativeName>
        <fullName evidence="1">1-hydroxy-2-methyl-2-(E)-butenyl 4-diphosphate synthase</fullName>
    </alternativeName>
</protein>
<feature type="chain" id="PRO_1000011534" description="4-hydroxy-3-methylbut-2-en-1-yl diphosphate synthase (ferredoxin)">
    <location>
        <begin position="1"/>
        <end position="407"/>
    </location>
</feature>
<feature type="binding site" evidence="1">
    <location>
        <position position="312"/>
    </location>
    <ligand>
        <name>[4Fe-4S] cluster</name>
        <dbReference type="ChEBI" id="CHEBI:49883"/>
    </ligand>
</feature>
<feature type="binding site" evidence="1">
    <location>
        <position position="315"/>
    </location>
    <ligand>
        <name>[4Fe-4S] cluster</name>
        <dbReference type="ChEBI" id="CHEBI:49883"/>
    </ligand>
</feature>
<feature type="binding site" evidence="1">
    <location>
        <position position="346"/>
    </location>
    <ligand>
        <name>[4Fe-4S] cluster</name>
        <dbReference type="ChEBI" id="CHEBI:49883"/>
    </ligand>
</feature>
<feature type="binding site" evidence="1">
    <location>
        <position position="353"/>
    </location>
    <ligand>
        <name>[4Fe-4S] cluster</name>
        <dbReference type="ChEBI" id="CHEBI:49883"/>
    </ligand>
</feature>
<sequence>MQTLSTPSTTATEFDTVIHRRPTRSVRVGDIWIGSRHPVVVQSMINEDTLDIDGSVAAIRRLHEIGCEIVRVTVPSLGHAKAVGDIKKKLQDTYRDVPLVADVHHNGMKIALEVAKHVDKVRINPGLYVFEKPDPNRQGYTPEEFERIGKQIRDTLEPLVTSLREQDKAMRIGVNHGSLAERMLFTYGDTPEGMVESALEFLRLCEEMDFRNLVISMKASRAPVMMAAYRLMAKRMDDLGMDYPLHLGVTEAGDGDYGRIKSTVGIGTLLAEGIGDTIRVSLTEAPENEIPVCYSILQALGLRKTMVEYVACPSCGRTLFNLEEVLHKVRAATNHLVGLDIAVMGCIVNGPGEMADADYGYVGKTPGTIALYRGRDEIKRVPEEQGVEELINLIKADGRWVEPEPIA</sequence>
<keyword id="KW-0004">4Fe-4S</keyword>
<keyword id="KW-0408">Iron</keyword>
<keyword id="KW-0411">Iron-sulfur</keyword>
<keyword id="KW-0414">Isoprene biosynthesis</keyword>
<keyword id="KW-0479">Metal-binding</keyword>
<keyword id="KW-0560">Oxidoreductase</keyword>
<keyword id="KW-1185">Reference proteome</keyword>
<comment type="function">
    <text evidence="1">Converts 2C-methyl-D-erythritol 2,4-cyclodiphosphate (ME-2,4cPP) into 1-hydroxy-2-methyl-2-(E)-butenyl 4-diphosphate.</text>
</comment>
<comment type="catalytic activity">
    <reaction evidence="1">
        <text>(2E)-4-hydroxy-3-methylbut-2-enyl diphosphate + 2 oxidized [2Fe-2S]-[ferredoxin] + H2O = 2-C-methyl-D-erythritol 2,4-cyclic diphosphate + 2 reduced [2Fe-2S]-[ferredoxin] + H(+)</text>
        <dbReference type="Rhea" id="RHEA:26119"/>
        <dbReference type="Rhea" id="RHEA-COMP:10000"/>
        <dbReference type="Rhea" id="RHEA-COMP:10001"/>
        <dbReference type="ChEBI" id="CHEBI:15377"/>
        <dbReference type="ChEBI" id="CHEBI:15378"/>
        <dbReference type="ChEBI" id="CHEBI:33737"/>
        <dbReference type="ChEBI" id="CHEBI:33738"/>
        <dbReference type="ChEBI" id="CHEBI:58483"/>
        <dbReference type="ChEBI" id="CHEBI:128753"/>
        <dbReference type="EC" id="1.17.7.1"/>
    </reaction>
</comment>
<comment type="cofactor">
    <cofactor evidence="1">
        <name>[4Fe-4S] cluster</name>
        <dbReference type="ChEBI" id="CHEBI:49883"/>
    </cofactor>
    <text evidence="1">Binds 1 [4Fe-4S] cluster.</text>
</comment>
<comment type="pathway">
    <text evidence="1">Isoprenoid biosynthesis; isopentenyl diphosphate biosynthesis via DXP pathway; isopentenyl diphosphate from 1-deoxy-D-xylulose 5-phosphate: step 5/6.</text>
</comment>
<comment type="similarity">
    <text evidence="1">Belongs to the IspG family.</text>
</comment>